<proteinExistence type="inferred from homology"/>
<protein>
    <recommendedName>
        <fullName evidence="1">Urease subunit gamma</fullName>
        <ecNumber evidence="1">3.5.1.5</ecNumber>
    </recommendedName>
    <alternativeName>
        <fullName evidence="1">Urea amidohydrolase subunit gamma</fullName>
    </alternativeName>
</protein>
<gene>
    <name evidence="1" type="primary">ureA</name>
    <name type="ordered locus">Aave_3526</name>
</gene>
<evidence type="ECO:0000255" key="1">
    <source>
        <dbReference type="HAMAP-Rule" id="MF_00739"/>
    </source>
</evidence>
<comment type="catalytic activity">
    <reaction evidence="1">
        <text>urea + 2 H2O + H(+) = hydrogencarbonate + 2 NH4(+)</text>
        <dbReference type="Rhea" id="RHEA:20557"/>
        <dbReference type="ChEBI" id="CHEBI:15377"/>
        <dbReference type="ChEBI" id="CHEBI:15378"/>
        <dbReference type="ChEBI" id="CHEBI:16199"/>
        <dbReference type="ChEBI" id="CHEBI:17544"/>
        <dbReference type="ChEBI" id="CHEBI:28938"/>
        <dbReference type="EC" id="3.5.1.5"/>
    </reaction>
</comment>
<comment type="pathway">
    <text evidence="1">Nitrogen metabolism; urea degradation; CO(2) and NH(3) from urea (urease route): step 1/1.</text>
</comment>
<comment type="subunit">
    <text evidence="1">Heterotrimer of UreA (gamma), UreB (beta) and UreC (alpha) subunits. Three heterotrimers associate to form the active enzyme.</text>
</comment>
<comment type="subcellular location">
    <subcellularLocation>
        <location evidence="1">Cytoplasm</location>
    </subcellularLocation>
</comment>
<comment type="similarity">
    <text evidence="1">Belongs to the urease gamma subunit family.</text>
</comment>
<reference key="1">
    <citation type="submission" date="2006-12" db="EMBL/GenBank/DDBJ databases">
        <title>Complete sequence of Acidovorax avenae subsp. citrulli AAC00-1.</title>
        <authorList>
            <person name="Copeland A."/>
            <person name="Lucas S."/>
            <person name="Lapidus A."/>
            <person name="Barry K."/>
            <person name="Detter J.C."/>
            <person name="Glavina del Rio T."/>
            <person name="Dalin E."/>
            <person name="Tice H."/>
            <person name="Pitluck S."/>
            <person name="Kiss H."/>
            <person name="Brettin T."/>
            <person name="Bruce D."/>
            <person name="Han C."/>
            <person name="Tapia R."/>
            <person name="Gilna P."/>
            <person name="Schmutz J."/>
            <person name="Larimer F."/>
            <person name="Land M."/>
            <person name="Hauser L."/>
            <person name="Kyrpides N."/>
            <person name="Kim E."/>
            <person name="Stahl D."/>
            <person name="Richardson P."/>
        </authorList>
    </citation>
    <scope>NUCLEOTIDE SEQUENCE [LARGE SCALE GENOMIC DNA]</scope>
    <source>
        <strain>AAC00-1</strain>
    </source>
</reference>
<feature type="chain" id="PRO_1000046305" description="Urease subunit gamma">
    <location>
        <begin position="1"/>
        <end position="100"/>
    </location>
</feature>
<name>URE3_PARC0</name>
<dbReference type="EC" id="3.5.1.5" evidence="1"/>
<dbReference type="EMBL" id="CP000512">
    <property type="protein sequence ID" value="ABM34081.1"/>
    <property type="molecule type" value="Genomic_DNA"/>
</dbReference>
<dbReference type="RefSeq" id="WP_011796578.1">
    <property type="nucleotide sequence ID" value="NC_008752.1"/>
</dbReference>
<dbReference type="SMR" id="A1TSZ3"/>
<dbReference type="STRING" id="397945.Aave_3526"/>
<dbReference type="KEGG" id="aav:Aave_3526"/>
<dbReference type="eggNOG" id="COG0831">
    <property type="taxonomic scope" value="Bacteria"/>
</dbReference>
<dbReference type="HOGENOM" id="CLU_145825_1_0_4"/>
<dbReference type="OrthoDB" id="9797217at2"/>
<dbReference type="UniPathway" id="UPA00258">
    <property type="reaction ID" value="UER00370"/>
</dbReference>
<dbReference type="Proteomes" id="UP000002596">
    <property type="component" value="Chromosome"/>
</dbReference>
<dbReference type="GO" id="GO:0005737">
    <property type="term" value="C:cytoplasm"/>
    <property type="evidence" value="ECO:0007669"/>
    <property type="project" value="UniProtKB-SubCell"/>
</dbReference>
<dbReference type="GO" id="GO:0016151">
    <property type="term" value="F:nickel cation binding"/>
    <property type="evidence" value="ECO:0007669"/>
    <property type="project" value="InterPro"/>
</dbReference>
<dbReference type="GO" id="GO:0009039">
    <property type="term" value="F:urease activity"/>
    <property type="evidence" value="ECO:0007669"/>
    <property type="project" value="UniProtKB-UniRule"/>
</dbReference>
<dbReference type="GO" id="GO:0043419">
    <property type="term" value="P:urea catabolic process"/>
    <property type="evidence" value="ECO:0007669"/>
    <property type="project" value="UniProtKB-UniRule"/>
</dbReference>
<dbReference type="CDD" id="cd00390">
    <property type="entry name" value="Urease_gamma"/>
    <property type="match status" value="1"/>
</dbReference>
<dbReference type="Gene3D" id="3.30.280.10">
    <property type="entry name" value="Urease, gamma-like subunit"/>
    <property type="match status" value="1"/>
</dbReference>
<dbReference type="HAMAP" id="MF_00739">
    <property type="entry name" value="Urease_gamma"/>
    <property type="match status" value="1"/>
</dbReference>
<dbReference type="InterPro" id="IPR012010">
    <property type="entry name" value="Urease_gamma"/>
</dbReference>
<dbReference type="InterPro" id="IPR002026">
    <property type="entry name" value="Urease_gamma/gamma-beta_su"/>
</dbReference>
<dbReference type="InterPro" id="IPR036463">
    <property type="entry name" value="Urease_gamma_sf"/>
</dbReference>
<dbReference type="InterPro" id="IPR050069">
    <property type="entry name" value="Urease_subunit"/>
</dbReference>
<dbReference type="NCBIfam" id="NF009712">
    <property type="entry name" value="PRK13241.1"/>
    <property type="match status" value="1"/>
</dbReference>
<dbReference type="NCBIfam" id="TIGR00193">
    <property type="entry name" value="urease_gam"/>
    <property type="match status" value="1"/>
</dbReference>
<dbReference type="PANTHER" id="PTHR33569">
    <property type="entry name" value="UREASE"/>
    <property type="match status" value="1"/>
</dbReference>
<dbReference type="PANTHER" id="PTHR33569:SF1">
    <property type="entry name" value="UREASE"/>
    <property type="match status" value="1"/>
</dbReference>
<dbReference type="Pfam" id="PF00547">
    <property type="entry name" value="Urease_gamma"/>
    <property type="match status" value="1"/>
</dbReference>
<dbReference type="PIRSF" id="PIRSF001223">
    <property type="entry name" value="Urease_gamma"/>
    <property type="match status" value="1"/>
</dbReference>
<dbReference type="SUPFAM" id="SSF54111">
    <property type="entry name" value="Urease, gamma-subunit"/>
    <property type="match status" value="1"/>
</dbReference>
<keyword id="KW-0963">Cytoplasm</keyword>
<keyword id="KW-0378">Hydrolase</keyword>
<organism>
    <name type="scientific">Paracidovorax citrulli (strain AAC00-1)</name>
    <name type="common">Acidovorax citrulli</name>
    <dbReference type="NCBI Taxonomy" id="397945"/>
    <lineage>
        <taxon>Bacteria</taxon>
        <taxon>Pseudomonadati</taxon>
        <taxon>Pseudomonadota</taxon>
        <taxon>Betaproteobacteria</taxon>
        <taxon>Burkholderiales</taxon>
        <taxon>Comamonadaceae</taxon>
        <taxon>Paracidovorax</taxon>
    </lineage>
</organism>
<accession>A1TSZ3</accession>
<sequence length="100" mass="10922">MELTPREKDKLFLFTAALLAERRKARGLKLNYPEAVALISAAVLEGARDGKTVAQLMSEGREVLTRADVMDGVPEMISDIQVEATFPDGTKLVTVHQPIA</sequence>